<name>AROK_LEGPC</name>
<protein>
    <recommendedName>
        <fullName evidence="1">Shikimate kinase</fullName>
        <shortName evidence="1">SK</shortName>
        <ecNumber evidence="1">2.7.1.71</ecNumber>
    </recommendedName>
</protein>
<sequence>MSIVKVRNIFLIGPMGAGKSTIGRALAKELKLEFYDSDEVIEERAGADISWIFDIEGEEGFRRREQKVIDELTQKTNIVLATGGGVVITPENRNALAGRGTVIYLKTSLQQQFERTKRDTKRPLLQTEDLEGRLESLRDEREPFYDELADVSFETDKLTVKAVANNIIKYLYGEV</sequence>
<reference key="1">
    <citation type="submission" date="2006-11" db="EMBL/GenBank/DDBJ databases">
        <title>Identification and characterization of a new conjugation/ type IVA secretion system (trb/tra) of L. pneumophila Corby localized on a mobile genomic island.</title>
        <authorList>
            <person name="Gloeckner G."/>
            <person name="Albert-Weissenberger C."/>
            <person name="Weinmann E."/>
            <person name="Jacobi S."/>
            <person name="Schunder E."/>
            <person name="Steinert M."/>
            <person name="Buchrieser C."/>
            <person name="Hacker J."/>
            <person name="Heuner K."/>
        </authorList>
    </citation>
    <scope>NUCLEOTIDE SEQUENCE [LARGE SCALE GENOMIC DNA]</scope>
    <source>
        <strain>Corby</strain>
    </source>
</reference>
<keyword id="KW-0028">Amino-acid biosynthesis</keyword>
<keyword id="KW-0057">Aromatic amino acid biosynthesis</keyword>
<keyword id="KW-0067">ATP-binding</keyword>
<keyword id="KW-0963">Cytoplasm</keyword>
<keyword id="KW-0418">Kinase</keyword>
<keyword id="KW-0460">Magnesium</keyword>
<keyword id="KW-0479">Metal-binding</keyword>
<keyword id="KW-0547">Nucleotide-binding</keyword>
<keyword id="KW-0808">Transferase</keyword>
<evidence type="ECO:0000255" key="1">
    <source>
        <dbReference type="HAMAP-Rule" id="MF_00109"/>
    </source>
</evidence>
<proteinExistence type="inferred from homology"/>
<organism>
    <name type="scientific">Legionella pneumophila (strain Corby)</name>
    <dbReference type="NCBI Taxonomy" id="400673"/>
    <lineage>
        <taxon>Bacteria</taxon>
        <taxon>Pseudomonadati</taxon>
        <taxon>Pseudomonadota</taxon>
        <taxon>Gammaproteobacteria</taxon>
        <taxon>Legionellales</taxon>
        <taxon>Legionellaceae</taxon>
        <taxon>Legionella</taxon>
    </lineage>
</organism>
<accession>A5IFY0</accession>
<comment type="function">
    <text evidence="1">Catalyzes the specific phosphorylation of the 3-hydroxyl group of shikimic acid using ATP as a cosubstrate.</text>
</comment>
<comment type="catalytic activity">
    <reaction evidence="1">
        <text>shikimate + ATP = 3-phosphoshikimate + ADP + H(+)</text>
        <dbReference type="Rhea" id="RHEA:13121"/>
        <dbReference type="ChEBI" id="CHEBI:15378"/>
        <dbReference type="ChEBI" id="CHEBI:30616"/>
        <dbReference type="ChEBI" id="CHEBI:36208"/>
        <dbReference type="ChEBI" id="CHEBI:145989"/>
        <dbReference type="ChEBI" id="CHEBI:456216"/>
        <dbReference type="EC" id="2.7.1.71"/>
    </reaction>
</comment>
<comment type="cofactor">
    <cofactor evidence="1">
        <name>Mg(2+)</name>
        <dbReference type="ChEBI" id="CHEBI:18420"/>
    </cofactor>
    <text evidence="1">Binds 1 Mg(2+) ion per subunit.</text>
</comment>
<comment type="pathway">
    <text evidence="1">Metabolic intermediate biosynthesis; chorismate biosynthesis; chorismate from D-erythrose 4-phosphate and phosphoenolpyruvate: step 5/7.</text>
</comment>
<comment type="subunit">
    <text evidence="1">Monomer.</text>
</comment>
<comment type="subcellular location">
    <subcellularLocation>
        <location evidence="1">Cytoplasm</location>
    </subcellularLocation>
</comment>
<comment type="similarity">
    <text evidence="1">Belongs to the shikimate kinase family.</text>
</comment>
<dbReference type="EC" id="2.7.1.71" evidence="1"/>
<dbReference type="EMBL" id="CP000675">
    <property type="protein sequence ID" value="ABQ56280.1"/>
    <property type="molecule type" value="Genomic_DNA"/>
</dbReference>
<dbReference type="RefSeq" id="WP_010946667.1">
    <property type="nucleotide sequence ID" value="NC_009494.2"/>
</dbReference>
<dbReference type="SMR" id="A5IFY0"/>
<dbReference type="KEGG" id="lpc:LPC_2358"/>
<dbReference type="HOGENOM" id="CLU_057607_2_2_6"/>
<dbReference type="UniPathway" id="UPA00053">
    <property type="reaction ID" value="UER00088"/>
</dbReference>
<dbReference type="GO" id="GO:0005829">
    <property type="term" value="C:cytosol"/>
    <property type="evidence" value="ECO:0007669"/>
    <property type="project" value="TreeGrafter"/>
</dbReference>
<dbReference type="GO" id="GO:0005524">
    <property type="term" value="F:ATP binding"/>
    <property type="evidence" value="ECO:0007669"/>
    <property type="project" value="UniProtKB-UniRule"/>
</dbReference>
<dbReference type="GO" id="GO:0000287">
    <property type="term" value="F:magnesium ion binding"/>
    <property type="evidence" value="ECO:0007669"/>
    <property type="project" value="UniProtKB-UniRule"/>
</dbReference>
<dbReference type="GO" id="GO:0004765">
    <property type="term" value="F:shikimate kinase activity"/>
    <property type="evidence" value="ECO:0007669"/>
    <property type="project" value="UniProtKB-UniRule"/>
</dbReference>
<dbReference type="GO" id="GO:0008652">
    <property type="term" value="P:amino acid biosynthetic process"/>
    <property type="evidence" value="ECO:0007669"/>
    <property type="project" value="UniProtKB-KW"/>
</dbReference>
<dbReference type="GO" id="GO:0009073">
    <property type="term" value="P:aromatic amino acid family biosynthetic process"/>
    <property type="evidence" value="ECO:0007669"/>
    <property type="project" value="UniProtKB-KW"/>
</dbReference>
<dbReference type="GO" id="GO:0009423">
    <property type="term" value="P:chorismate biosynthetic process"/>
    <property type="evidence" value="ECO:0007669"/>
    <property type="project" value="UniProtKB-UniRule"/>
</dbReference>
<dbReference type="CDD" id="cd00464">
    <property type="entry name" value="SK"/>
    <property type="match status" value="1"/>
</dbReference>
<dbReference type="Gene3D" id="3.40.50.300">
    <property type="entry name" value="P-loop containing nucleotide triphosphate hydrolases"/>
    <property type="match status" value="1"/>
</dbReference>
<dbReference type="HAMAP" id="MF_00109">
    <property type="entry name" value="Shikimate_kinase"/>
    <property type="match status" value="1"/>
</dbReference>
<dbReference type="InterPro" id="IPR027417">
    <property type="entry name" value="P-loop_NTPase"/>
</dbReference>
<dbReference type="InterPro" id="IPR031322">
    <property type="entry name" value="Shikimate/glucono_kinase"/>
</dbReference>
<dbReference type="InterPro" id="IPR000623">
    <property type="entry name" value="Shikimate_kinase/TSH1"/>
</dbReference>
<dbReference type="InterPro" id="IPR023000">
    <property type="entry name" value="Shikimate_kinase_CS"/>
</dbReference>
<dbReference type="NCBIfam" id="NF003456">
    <property type="entry name" value="PRK05057.1"/>
    <property type="match status" value="1"/>
</dbReference>
<dbReference type="PANTHER" id="PTHR21087">
    <property type="entry name" value="SHIKIMATE KINASE"/>
    <property type="match status" value="1"/>
</dbReference>
<dbReference type="PANTHER" id="PTHR21087:SF16">
    <property type="entry name" value="SHIKIMATE KINASE 1, CHLOROPLASTIC"/>
    <property type="match status" value="1"/>
</dbReference>
<dbReference type="Pfam" id="PF01202">
    <property type="entry name" value="SKI"/>
    <property type="match status" value="1"/>
</dbReference>
<dbReference type="PRINTS" id="PR01100">
    <property type="entry name" value="SHIKIMTKNASE"/>
</dbReference>
<dbReference type="SUPFAM" id="SSF52540">
    <property type="entry name" value="P-loop containing nucleoside triphosphate hydrolases"/>
    <property type="match status" value="1"/>
</dbReference>
<dbReference type="PROSITE" id="PS01128">
    <property type="entry name" value="SHIKIMATE_KINASE"/>
    <property type="match status" value="1"/>
</dbReference>
<feature type="chain" id="PRO_1000022979" description="Shikimate kinase">
    <location>
        <begin position="1"/>
        <end position="175"/>
    </location>
</feature>
<feature type="binding site" evidence="1">
    <location>
        <begin position="16"/>
        <end position="21"/>
    </location>
    <ligand>
        <name>ATP</name>
        <dbReference type="ChEBI" id="CHEBI:30616"/>
    </ligand>
</feature>
<feature type="binding site" evidence="1">
    <location>
        <position position="20"/>
    </location>
    <ligand>
        <name>Mg(2+)</name>
        <dbReference type="ChEBI" id="CHEBI:18420"/>
    </ligand>
</feature>
<feature type="binding site" evidence="1">
    <location>
        <position position="38"/>
    </location>
    <ligand>
        <name>substrate</name>
    </ligand>
</feature>
<feature type="binding site" evidence="1">
    <location>
        <position position="62"/>
    </location>
    <ligand>
        <name>substrate</name>
    </ligand>
</feature>
<feature type="binding site" evidence="1">
    <location>
        <position position="84"/>
    </location>
    <ligand>
        <name>substrate</name>
    </ligand>
</feature>
<feature type="binding site" evidence="1">
    <location>
        <position position="122"/>
    </location>
    <ligand>
        <name>ATP</name>
        <dbReference type="ChEBI" id="CHEBI:30616"/>
    </ligand>
</feature>
<feature type="binding site" evidence="1">
    <location>
        <position position="141"/>
    </location>
    <ligand>
        <name>substrate</name>
    </ligand>
</feature>
<gene>
    <name evidence="1" type="primary">aroK</name>
    <name type="ordered locus">LPC_2358</name>
</gene>